<gene>
    <name type="ordered locus">YDL073W</name>
</gene>
<sequence>MGPAIHNQLYECGLKTTSQDGFLMDNYETQLFQSLNRFINFINNANQSASNKEQNTKFCKSSSNFLRLKLLTVLRQWCDSSRSNCTLEVRDVLTQWWVTLLNFLNSDTSLQIDTALELSLSIELTSVCLECLSKIMTILIILPFHSSRDMEIYSHHLLLTIHCITNKLILISKNSKKLKRTNSDDKCSINDKKLQYLNKYSSLLRAFIGKLNAYAFFYLPEDFHFDTILLLTVSPQISSSIQTSLFSWKKRQYKFTDDQGQMIRTEAFENKDTKFFKIIVSYIKNDFVLMSFYWHYWYIILQFMKFSDSDVGIKKSTLSCIPGSEILLTHVTTRFLNSDLNKFTRIIKQTPNPRIANENVTESHPNFKSLNSSNALITSERINDYVFSNFKTIKLWECLRSLSGCILKENHPEYLENMLSLHESLLIDYVSTISAYDYIAANVIYNKVLQFIIFQFESLPSLKFIQWRSWYNGLLSMLRTKNVNCQTVSLLCLFNIWKHVTIEDRDEIVKVLLSDFWESLIFENEFPLIRILFMKVLVFKIIPSVQNSSSLRFLPHDRIKQLYEELLVNKEELFEMQKHDSNDIVAHRKNALVFNGNSRLMMIPKKPNTEDHLVYKINHDKNLTTERFPSVSSVANTRPNVILKNGKYAYDILDEMTSKAAFLLAEKKTRLNPKKNHKIMDGYEGGQENEDNDEDSEDSGSHKNKRKEGNSSLSATLNTWLSKFSSTSEDSQKKKEQANELGNDFEYDEDVADFAEILPKQSSSNIEKIFKHGNNSGSMVSYNSSIKLNRRENILIGPPELRFSNEIKEHNSIATIFKLVFIQTNRRVVEKIDLANMKWGTIHGGSKYMKPLPVPKDLVASVAKNESETRNLATLCGNGLDFEIPVPDFNIFGKCMEDEQDVAKIGNQNVEDLKVTGGREVTIWKQIQDMKLRTRIQKICVLIETFNATVREYFEFSNRLEHDGIFIDFEVRKPSSNNSINIKV</sequence>
<keyword id="KW-1185">Reference proteome</keyword>
<accession>Q07454</accession>
<accession>D6VRS6</accession>
<comment type="disruption phenotype">
    <text evidence="2">Cells are viable and do not display any phenotype.</text>
</comment>
<comment type="similarity">
    <text evidence="3">Belongs to the UPF0592 family.</text>
</comment>
<evidence type="ECO:0000256" key="1">
    <source>
        <dbReference type="SAM" id="MobiDB-lite"/>
    </source>
</evidence>
<evidence type="ECO:0000269" key="2">
    <source>
    </source>
</evidence>
<evidence type="ECO:0000305" key="3"/>
<name>YD073_YEAST</name>
<organism>
    <name type="scientific">Saccharomyces cerevisiae (strain ATCC 204508 / S288c)</name>
    <name type="common">Baker's yeast</name>
    <dbReference type="NCBI Taxonomy" id="559292"/>
    <lineage>
        <taxon>Eukaryota</taxon>
        <taxon>Fungi</taxon>
        <taxon>Dikarya</taxon>
        <taxon>Ascomycota</taxon>
        <taxon>Saccharomycotina</taxon>
        <taxon>Saccharomycetes</taxon>
        <taxon>Saccharomycetales</taxon>
        <taxon>Saccharomycetaceae</taxon>
        <taxon>Saccharomyces</taxon>
    </lineage>
</organism>
<reference key="1">
    <citation type="journal article" date="1997" name="Nature">
        <title>The nucleotide sequence of Saccharomyces cerevisiae chromosome IV.</title>
        <authorList>
            <person name="Jacq C."/>
            <person name="Alt-Moerbe J."/>
            <person name="Andre B."/>
            <person name="Arnold W."/>
            <person name="Bahr A."/>
            <person name="Ballesta J.P.G."/>
            <person name="Bargues M."/>
            <person name="Baron L."/>
            <person name="Becker A."/>
            <person name="Biteau N."/>
            <person name="Bloecker H."/>
            <person name="Blugeon C."/>
            <person name="Boskovic J."/>
            <person name="Brandt P."/>
            <person name="Brueckner M."/>
            <person name="Buitrago M.J."/>
            <person name="Coster F."/>
            <person name="Delaveau T."/>
            <person name="del Rey F."/>
            <person name="Dujon B."/>
            <person name="Eide L.G."/>
            <person name="Garcia-Cantalejo J.M."/>
            <person name="Goffeau A."/>
            <person name="Gomez-Peris A."/>
            <person name="Granotier C."/>
            <person name="Hanemann V."/>
            <person name="Hankeln T."/>
            <person name="Hoheisel J.D."/>
            <person name="Jaeger W."/>
            <person name="Jimenez A."/>
            <person name="Jonniaux J.-L."/>
            <person name="Kraemer C."/>
            <person name="Kuester H."/>
            <person name="Laamanen P."/>
            <person name="Legros Y."/>
            <person name="Louis E.J."/>
            <person name="Moeller-Rieker S."/>
            <person name="Monnet A."/>
            <person name="Moro M."/>
            <person name="Mueller-Auer S."/>
            <person name="Nussbaumer B."/>
            <person name="Paricio N."/>
            <person name="Paulin L."/>
            <person name="Perea J."/>
            <person name="Perez-Alonso M."/>
            <person name="Perez-Ortin J.E."/>
            <person name="Pohl T.M."/>
            <person name="Prydz H."/>
            <person name="Purnelle B."/>
            <person name="Rasmussen S.W."/>
            <person name="Remacha M.A."/>
            <person name="Revuelta J.L."/>
            <person name="Rieger M."/>
            <person name="Salom D."/>
            <person name="Saluz H.P."/>
            <person name="Saiz J.E."/>
            <person name="Saren A.-M."/>
            <person name="Schaefer M."/>
            <person name="Scharfe M."/>
            <person name="Schmidt E.R."/>
            <person name="Schneider C."/>
            <person name="Scholler P."/>
            <person name="Schwarz S."/>
            <person name="Soler-Mira A."/>
            <person name="Urrestarazu L.A."/>
            <person name="Verhasselt P."/>
            <person name="Vissers S."/>
            <person name="Voet M."/>
            <person name="Volckaert G."/>
            <person name="Wagner G."/>
            <person name="Wambutt R."/>
            <person name="Wedler E."/>
            <person name="Wedler H."/>
            <person name="Woelfl S."/>
            <person name="Harris D.E."/>
            <person name="Bowman S."/>
            <person name="Brown D."/>
            <person name="Churcher C.M."/>
            <person name="Connor R."/>
            <person name="Dedman K."/>
            <person name="Gentles S."/>
            <person name="Hamlin N."/>
            <person name="Hunt S."/>
            <person name="Jones L."/>
            <person name="McDonald S."/>
            <person name="Murphy L.D."/>
            <person name="Niblett D."/>
            <person name="Odell C."/>
            <person name="Oliver K."/>
            <person name="Rajandream M.A."/>
            <person name="Richards C."/>
            <person name="Shore L."/>
            <person name="Walsh S.V."/>
            <person name="Barrell B.G."/>
            <person name="Dietrich F.S."/>
            <person name="Mulligan J.T."/>
            <person name="Allen E."/>
            <person name="Araujo R."/>
            <person name="Aviles E."/>
            <person name="Berno A."/>
            <person name="Carpenter J."/>
            <person name="Chen E."/>
            <person name="Cherry J.M."/>
            <person name="Chung E."/>
            <person name="Duncan M."/>
            <person name="Hunicke-Smith S."/>
            <person name="Hyman R.W."/>
            <person name="Komp C."/>
            <person name="Lashkari D."/>
            <person name="Lew H."/>
            <person name="Lin D."/>
            <person name="Mosedale D."/>
            <person name="Nakahara K."/>
            <person name="Namath A."/>
            <person name="Oefner P."/>
            <person name="Oh C."/>
            <person name="Petel F.X."/>
            <person name="Roberts D."/>
            <person name="Schramm S."/>
            <person name="Schroeder M."/>
            <person name="Shogren T."/>
            <person name="Shroff N."/>
            <person name="Winant A."/>
            <person name="Yelton M.A."/>
            <person name="Botstein D."/>
            <person name="Davis R.W."/>
            <person name="Johnston M."/>
            <person name="Andrews S."/>
            <person name="Brinkman R."/>
            <person name="Cooper J."/>
            <person name="Ding H."/>
            <person name="Du Z."/>
            <person name="Favello A."/>
            <person name="Fulton L."/>
            <person name="Gattung S."/>
            <person name="Greco T."/>
            <person name="Hallsworth K."/>
            <person name="Hawkins J."/>
            <person name="Hillier L.W."/>
            <person name="Jier M."/>
            <person name="Johnson D."/>
            <person name="Johnston L."/>
            <person name="Kirsten J."/>
            <person name="Kucaba T."/>
            <person name="Langston Y."/>
            <person name="Latreille P."/>
            <person name="Le T."/>
            <person name="Mardis E."/>
            <person name="Menezes S."/>
            <person name="Miller N."/>
            <person name="Nhan M."/>
            <person name="Pauley A."/>
            <person name="Peluso D."/>
            <person name="Rifkin L."/>
            <person name="Riles L."/>
            <person name="Taich A."/>
            <person name="Trevaskis E."/>
            <person name="Vignati D."/>
            <person name="Wilcox L."/>
            <person name="Wohldman P."/>
            <person name="Vaudin M."/>
            <person name="Wilson R."/>
            <person name="Waterston R."/>
            <person name="Albermann K."/>
            <person name="Hani J."/>
            <person name="Heumann K."/>
            <person name="Kleine K."/>
            <person name="Mewes H.-W."/>
            <person name="Zollner A."/>
            <person name="Zaccaria P."/>
        </authorList>
    </citation>
    <scope>NUCLEOTIDE SEQUENCE [LARGE SCALE GENOMIC DNA]</scope>
    <source>
        <strain>ATCC 204508 / S288c</strain>
    </source>
</reference>
<reference key="2">
    <citation type="journal article" date="2014" name="G3 (Bethesda)">
        <title>The reference genome sequence of Saccharomyces cerevisiae: Then and now.</title>
        <authorList>
            <person name="Engel S.R."/>
            <person name="Dietrich F.S."/>
            <person name="Fisk D.G."/>
            <person name="Binkley G."/>
            <person name="Balakrishnan R."/>
            <person name="Costanzo M.C."/>
            <person name="Dwight S.S."/>
            <person name="Hitz B.C."/>
            <person name="Karra K."/>
            <person name="Nash R.S."/>
            <person name="Weng S."/>
            <person name="Wong E.D."/>
            <person name="Lloyd P."/>
            <person name="Skrzypek M.S."/>
            <person name="Miyasato S.R."/>
            <person name="Simison M."/>
            <person name="Cherry J.M."/>
        </authorList>
    </citation>
    <scope>GENOME REANNOTATION</scope>
    <source>
        <strain>ATCC 204508 / S288c</strain>
    </source>
</reference>
<reference key="3">
    <citation type="journal article" date="2000" name="Yeast">
        <title>Disruption and functional analysis of six ORFs on chromosome IV: YDL053c, YDL072c, YDL073w, YDL076c, YDL077c and YDL080c.</title>
        <authorList>
            <person name="Blasco A."/>
            <person name="Sanz P."/>
        </authorList>
    </citation>
    <scope>DISRUPTION PHENOTYPE</scope>
</reference>
<reference key="4">
    <citation type="journal article" date="2009" name="Science">
        <title>Global analysis of Cdk1 substrate phosphorylation sites provides insights into evolution.</title>
        <authorList>
            <person name="Holt L.J."/>
            <person name="Tuch B.B."/>
            <person name="Villen J."/>
            <person name="Johnson A.D."/>
            <person name="Gygi S.P."/>
            <person name="Morgan D.O."/>
        </authorList>
    </citation>
    <scope>IDENTIFICATION BY MASS SPECTROMETRY [LARGE SCALE ANALYSIS]</scope>
</reference>
<protein>
    <recommendedName>
        <fullName>UPF0592 protein YDL073W</fullName>
    </recommendedName>
</protein>
<feature type="chain" id="PRO_0000248460" description="UPF0592 protein YDL073W">
    <location>
        <begin position="1"/>
        <end position="984"/>
    </location>
</feature>
<feature type="region of interest" description="Disordered" evidence="1">
    <location>
        <begin position="675"/>
        <end position="712"/>
    </location>
</feature>
<feature type="compositionally biased region" description="Acidic residues" evidence="1">
    <location>
        <begin position="687"/>
        <end position="698"/>
    </location>
</feature>
<dbReference type="EMBL" id="Z74121">
    <property type="protein sequence ID" value="CAA98639.1"/>
    <property type="molecule type" value="Genomic_DNA"/>
</dbReference>
<dbReference type="EMBL" id="BK006938">
    <property type="protein sequence ID" value="DAA11786.1"/>
    <property type="molecule type" value="Genomic_DNA"/>
</dbReference>
<dbReference type="PIR" id="S67609">
    <property type="entry name" value="S67609"/>
</dbReference>
<dbReference type="BioGRID" id="31988">
    <property type="interactions" value="85"/>
</dbReference>
<dbReference type="FunCoup" id="Q07454">
    <property type="interactions" value="134"/>
</dbReference>
<dbReference type="IntAct" id="Q07454">
    <property type="interactions" value="19"/>
</dbReference>
<dbReference type="MINT" id="Q07454"/>
<dbReference type="STRING" id="4932.YDL073W"/>
<dbReference type="iPTMnet" id="Q07454"/>
<dbReference type="PaxDb" id="4932-YDL073W"/>
<dbReference type="PeptideAtlas" id="Q07454"/>
<dbReference type="EnsemblFungi" id="YDL073W_mRNA">
    <property type="protein sequence ID" value="YDL073W"/>
    <property type="gene ID" value="YDL073W"/>
</dbReference>
<dbReference type="KEGG" id="sce:YDL073W"/>
<dbReference type="AGR" id="SGD:S000002231"/>
<dbReference type="SGD" id="S000002231">
    <property type="gene designation" value="YDL073W"/>
</dbReference>
<dbReference type="VEuPathDB" id="FungiDB:YDL073W"/>
<dbReference type="eggNOG" id="ENOG502QQ52">
    <property type="taxonomic scope" value="Eukaryota"/>
</dbReference>
<dbReference type="HOGENOM" id="CLU_006978_0_0_1"/>
<dbReference type="InParanoid" id="Q07454"/>
<dbReference type="OMA" id="WHYWYII"/>
<dbReference type="OrthoDB" id="296767at2759"/>
<dbReference type="BioCyc" id="YEAST:G3O-29484-MONOMER"/>
<dbReference type="BioGRID-ORCS" id="851486">
    <property type="hits" value="3 hits in 10 CRISPR screens"/>
</dbReference>
<dbReference type="PRO" id="PR:Q07454"/>
<dbReference type="Proteomes" id="UP000002311">
    <property type="component" value="Chromosome IV"/>
</dbReference>
<dbReference type="RNAct" id="Q07454">
    <property type="molecule type" value="protein"/>
</dbReference>
<dbReference type="GO" id="GO:0005078">
    <property type="term" value="F:MAP-kinase scaffold activity"/>
    <property type="evidence" value="ECO:0000353"/>
    <property type="project" value="SGD"/>
</dbReference>
<dbReference type="GO" id="GO:0007232">
    <property type="term" value="P:osmosensory signaling pathway via Sho1 osmosensor"/>
    <property type="evidence" value="ECO:0000316"/>
    <property type="project" value="SGD"/>
</dbReference>
<dbReference type="InterPro" id="IPR013887">
    <property type="entry name" value="UPF0592"/>
</dbReference>
<dbReference type="Pfam" id="PF08578">
    <property type="entry name" value="DUF1765"/>
    <property type="match status" value="1"/>
</dbReference>
<proteinExistence type="evidence at protein level"/>